<feature type="chain" id="PRO_1000063385" description="Phosphoribosyl-AMP cyclohydrolase">
    <location>
        <begin position="1"/>
        <end position="142"/>
    </location>
</feature>
<feature type="region of interest" description="Disordered" evidence="2">
    <location>
        <begin position="120"/>
        <end position="142"/>
    </location>
</feature>
<feature type="binding site" evidence="1">
    <location>
        <position position="85"/>
    </location>
    <ligand>
        <name>Mg(2+)</name>
        <dbReference type="ChEBI" id="CHEBI:18420"/>
    </ligand>
</feature>
<feature type="binding site" evidence="1">
    <location>
        <position position="86"/>
    </location>
    <ligand>
        <name>Zn(2+)</name>
        <dbReference type="ChEBI" id="CHEBI:29105"/>
        <note>ligand shared between dimeric partners</note>
    </ligand>
</feature>
<feature type="binding site" evidence="1">
    <location>
        <position position="87"/>
    </location>
    <ligand>
        <name>Mg(2+)</name>
        <dbReference type="ChEBI" id="CHEBI:18420"/>
    </ligand>
</feature>
<feature type="binding site" evidence="1">
    <location>
        <position position="89"/>
    </location>
    <ligand>
        <name>Mg(2+)</name>
        <dbReference type="ChEBI" id="CHEBI:18420"/>
    </ligand>
</feature>
<feature type="binding site" evidence="1">
    <location>
        <position position="102"/>
    </location>
    <ligand>
        <name>Zn(2+)</name>
        <dbReference type="ChEBI" id="CHEBI:29105"/>
        <note>ligand shared between dimeric partners</note>
    </ligand>
</feature>
<feature type="binding site" evidence="1">
    <location>
        <position position="109"/>
    </location>
    <ligand>
        <name>Zn(2+)</name>
        <dbReference type="ChEBI" id="CHEBI:29105"/>
        <note>ligand shared between dimeric partners</note>
    </ligand>
</feature>
<name>HIS3_ACIC1</name>
<keyword id="KW-0028">Amino-acid biosynthesis</keyword>
<keyword id="KW-0963">Cytoplasm</keyword>
<keyword id="KW-0368">Histidine biosynthesis</keyword>
<keyword id="KW-0378">Hydrolase</keyword>
<keyword id="KW-0460">Magnesium</keyword>
<keyword id="KW-0479">Metal-binding</keyword>
<keyword id="KW-1185">Reference proteome</keyword>
<keyword id="KW-0862">Zinc</keyword>
<sequence>MTRRPSNLDPAIAARLKRDEHGLFPAVAQQYDTGEVLMVGWMDDEALHRTLTTGRCTYWSRSRQEYWVKGETSGHQQWVKSVALDCDGDTVLVKVDQIGAACHTGDRTCFDAGQLPAVVGEPPTPVGAGERQPASGTADAAP</sequence>
<comment type="function">
    <text evidence="1">Catalyzes the hydrolysis of the adenine ring of phosphoribosyl-AMP.</text>
</comment>
<comment type="catalytic activity">
    <reaction evidence="1">
        <text>1-(5-phospho-beta-D-ribosyl)-5'-AMP + H2O = 1-(5-phospho-beta-D-ribosyl)-5-[(5-phospho-beta-D-ribosylamino)methylideneamino]imidazole-4-carboxamide</text>
        <dbReference type="Rhea" id="RHEA:20049"/>
        <dbReference type="ChEBI" id="CHEBI:15377"/>
        <dbReference type="ChEBI" id="CHEBI:58435"/>
        <dbReference type="ChEBI" id="CHEBI:59457"/>
        <dbReference type="EC" id="3.5.4.19"/>
    </reaction>
</comment>
<comment type="cofactor">
    <cofactor evidence="1">
        <name>Mg(2+)</name>
        <dbReference type="ChEBI" id="CHEBI:18420"/>
    </cofactor>
    <text evidence="1">Binds 1 Mg(2+) ion per subunit.</text>
</comment>
<comment type="cofactor">
    <cofactor evidence="1">
        <name>Zn(2+)</name>
        <dbReference type="ChEBI" id="CHEBI:29105"/>
    </cofactor>
    <text evidence="1">Binds 1 zinc ion per subunit.</text>
</comment>
<comment type="pathway">
    <text evidence="1">Amino-acid biosynthesis; L-histidine biosynthesis; L-histidine from 5-phospho-alpha-D-ribose 1-diphosphate: step 3/9.</text>
</comment>
<comment type="subunit">
    <text evidence="1">Homodimer.</text>
</comment>
<comment type="subcellular location">
    <subcellularLocation>
        <location evidence="1">Cytoplasm</location>
    </subcellularLocation>
</comment>
<comment type="similarity">
    <text evidence="1">Belongs to the PRA-CH family.</text>
</comment>
<proteinExistence type="inferred from homology"/>
<dbReference type="EC" id="3.5.4.19" evidence="1"/>
<dbReference type="EMBL" id="CP000481">
    <property type="protein sequence ID" value="ABK52842.1"/>
    <property type="molecule type" value="Genomic_DNA"/>
</dbReference>
<dbReference type="RefSeq" id="WP_011719905.1">
    <property type="nucleotide sequence ID" value="NC_008578.1"/>
</dbReference>
<dbReference type="SMR" id="A0LTT2"/>
<dbReference type="FunCoup" id="A0LTT2">
    <property type="interactions" value="86"/>
</dbReference>
<dbReference type="STRING" id="351607.Acel_1070"/>
<dbReference type="KEGG" id="ace:Acel_1070"/>
<dbReference type="eggNOG" id="COG0139">
    <property type="taxonomic scope" value="Bacteria"/>
</dbReference>
<dbReference type="HOGENOM" id="CLU_048577_5_1_11"/>
<dbReference type="InParanoid" id="A0LTT2"/>
<dbReference type="OrthoDB" id="9795769at2"/>
<dbReference type="UniPathway" id="UPA00031">
    <property type="reaction ID" value="UER00008"/>
</dbReference>
<dbReference type="Proteomes" id="UP000008221">
    <property type="component" value="Chromosome"/>
</dbReference>
<dbReference type="GO" id="GO:0005737">
    <property type="term" value="C:cytoplasm"/>
    <property type="evidence" value="ECO:0007669"/>
    <property type="project" value="UniProtKB-SubCell"/>
</dbReference>
<dbReference type="GO" id="GO:0000287">
    <property type="term" value="F:magnesium ion binding"/>
    <property type="evidence" value="ECO:0007669"/>
    <property type="project" value="UniProtKB-UniRule"/>
</dbReference>
<dbReference type="GO" id="GO:0004635">
    <property type="term" value="F:phosphoribosyl-AMP cyclohydrolase activity"/>
    <property type="evidence" value="ECO:0007669"/>
    <property type="project" value="UniProtKB-UniRule"/>
</dbReference>
<dbReference type="GO" id="GO:0008270">
    <property type="term" value="F:zinc ion binding"/>
    <property type="evidence" value="ECO:0007669"/>
    <property type="project" value="UniProtKB-UniRule"/>
</dbReference>
<dbReference type="GO" id="GO:0000105">
    <property type="term" value="P:L-histidine biosynthetic process"/>
    <property type="evidence" value="ECO:0007669"/>
    <property type="project" value="UniProtKB-UniRule"/>
</dbReference>
<dbReference type="FunFam" id="3.10.20.810:FF:000001">
    <property type="entry name" value="Histidine biosynthesis bifunctional protein HisIE"/>
    <property type="match status" value="1"/>
</dbReference>
<dbReference type="Gene3D" id="3.10.20.810">
    <property type="entry name" value="Phosphoribosyl-AMP cyclohydrolase"/>
    <property type="match status" value="1"/>
</dbReference>
<dbReference type="HAMAP" id="MF_01021">
    <property type="entry name" value="HisI"/>
    <property type="match status" value="1"/>
</dbReference>
<dbReference type="InterPro" id="IPR026660">
    <property type="entry name" value="PRA-CH"/>
</dbReference>
<dbReference type="InterPro" id="IPR002496">
    <property type="entry name" value="PRib_AMP_CycHydrolase_dom"/>
</dbReference>
<dbReference type="InterPro" id="IPR038019">
    <property type="entry name" value="PRib_AMP_CycHydrolase_sf"/>
</dbReference>
<dbReference type="NCBIfam" id="NF000768">
    <property type="entry name" value="PRK00051.1"/>
    <property type="match status" value="1"/>
</dbReference>
<dbReference type="PANTHER" id="PTHR42945">
    <property type="entry name" value="HISTIDINE BIOSYNTHESIS BIFUNCTIONAL PROTEIN"/>
    <property type="match status" value="1"/>
</dbReference>
<dbReference type="PANTHER" id="PTHR42945:SF11">
    <property type="entry name" value="PHOSPHORIBOSYL-AMP CYCLOHYDROLASE"/>
    <property type="match status" value="1"/>
</dbReference>
<dbReference type="Pfam" id="PF01502">
    <property type="entry name" value="PRA-CH"/>
    <property type="match status" value="1"/>
</dbReference>
<dbReference type="SUPFAM" id="SSF141734">
    <property type="entry name" value="HisI-like"/>
    <property type="match status" value="1"/>
</dbReference>
<gene>
    <name evidence="1" type="primary">hisI</name>
    <name type="ordered locus">Acel_1070</name>
</gene>
<organism>
    <name type="scientific">Acidothermus cellulolyticus (strain ATCC 43068 / DSM 8971 / 11B)</name>
    <dbReference type="NCBI Taxonomy" id="351607"/>
    <lineage>
        <taxon>Bacteria</taxon>
        <taxon>Bacillati</taxon>
        <taxon>Actinomycetota</taxon>
        <taxon>Actinomycetes</taxon>
        <taxon>Acidothermales</taxon>
        <taxon>Acidothermaceae</taxon>
        <taxon>Acidothermus</taxon>
    </lineage>
</organism>
<accession>A0LTT2</accession>
<evidence type="ECO:0000255" key="1">
    <source>
        <dbReference type="HAMAP-Rule" id="MF_01021"/>
    </source>
</evidence>
<evidence type="ECO:0000256" key="2">
    <source>
        <dbReference type="SAM" id="MobiDB-lite"/>
    </source>
</evidence>
<reference key="1">
    <citation type="journal article" date="2009" name="Genome Res.">
        <title>Complete genome of the cellulolytic thermophile Acidothermus cellulolyticus 11B provides insights into its ecophysiological and evolutionary adaptations.</title>
        <authorList>
            <person name="Barabote R.D."/>
            <person name="Xie G."/>
            <person name="Leu D.H."/>
            <person name="Normand P."/>
            <person name="Necsulea A."/>
            <person name="Daubin V."/>
            <person name="Medigue C."/>
            <person name="Adney W.S."/>
            <person name="Xu X.C."/>
            <person name="Lapidus A."/>
            <person name="Parales R.E."/>
            <person name="Detter C."/>
            <person name="Pujic P."/>
            <person name="Bruce D."/>
            <person name="Lavire C."/>
            <person name="Challacombe J.F."/>
            <person name="Brettin T.S."/>
            <person name="Berry A.M."/>
        </authorList>
    </citation>
    <scope>NUCLEOTIDE SEQUENCE [LARGE SCALE GENOMIC DNA]</scope>
    <source>
        <strain>ATCC 43068 / DSM 8971 / 11B</strain>
    </source>
</reference>
<protein>
    <recommendedName>
        <fullName evidence="1">Phosphoribosyl-AMP cyclohydrolase</fullName>
        <shortName evidence="1">PRA-CH</shortName>
        <ecNumber evidence="1">3.5.4.19</ecNumber>
    </recommendedName>
</protein>